<name>RIMO_HELPH</name>
<comment type="function">
    <text evidence="1">Catalyzes the methylthiolation of an aspartic acid residue of ribosomal protein uS12.</text>
</comment>
<comment type="catalytic activity">
    <reaction evidence="1">
        <text>L-aspartate(89)-[ribosomal protein uS12]-hydrogen + (sulfur carrier)-SH + AH2 + 2 S-adenosyl-L-methionine = 3-methylsulfanyl-L-aspartate(89)-[ribosomal protein uS12]-hydrogen + (sulfur carrier)-H + 5'-deoxyadenosine + L-methionine + A + S-adenosyl-L-homocysteine + 2 H(+)</text>
        <dbReference type="Rhea" id="RHEA:37087"/>
        <dbReference type="Rhea" id="RHEA-COMP:10460"/>
        <dbReference type="Rhea" id="RHEA-COMP:10461"/>
        <dbReference type="Rhea" id="RHEA-COMP:14737"/>
        <dbReference type="Rhea" id="RHEA-COMP:14739"/>
        <dbReference type="ChEBI" id="CHEBI:13193"/>
        <dbReference type="ChEBI" id="CHEBI:15378"/>
        <dbReference type="ChEBI" id="CHEBI:17319"/>
        <dbReference type="ChEBI" id="CHEBI:17499"/>
        <dbReference type="ChEBI" id="CHEBI:29917"/>
        <dbReference type="ChEBI" id="CHEBI:29961"/>
        <dbReference type="ChEBI" id="CHEBI:57844"/>
        <dbReference type="ChEBI" id="CHEBI:57856"/>
        <dbReference type="ChEBI" id="CHEBI:59789"/>
        <dbReference type="ChEBI" id="CHEBI:64428"/>
        <dbReference type="ChEBI" id="CHEBI:73599"/>
        <dbReference type="EC" id="2.8.4.4"/>
    </reaction>
</comment>
<comment type="cofactor">
    <cofactor evidence="1">
        <name>[4Fe-4S] cluster</name>
        <dbReference type="ChEBI" id="CHEBI:49883"/>
    </cofactor>
    <text evidence="1">Binds 2 [4Fe-4S] clusters. One cluster is coordinated with 3 cysteines and an exchangeable S-adenosyl-L-methionine.</text>
</comment>
<comment type="subcellular location">
    <subcellularLocation>
        <location evidence="1">Cytoplasm</location>
    </subcellularLocation>
</comment>
<comment type="similarity">
    <text evidence="1">Belongs to the methylthiotransferase family. RimO subfamily.</text>
</comment>
<keyword id="KW-0004">4Fe-4S</keyword>
<keyword id="KW-0963">Cytoplasm</keyword>
<keyword id="KW-0408">Iron</keyword>
<keyword id="KW-0411">Iron-sulfur</keyword>
<keyword id="KW-0479">Metal-binding</keyword>
<keyword id="KW-0949">S-adenosyl-L-methionine</keyword>
<keyword id="KW-0808">Transferase</keyword>
<reference key="1">
    <citation type="journal article" date="2006" name="Proc. Natl. Acad. Sci. U.S.A.">
        <title>The complete genome sequence of a chronic atrophic gastritis Helicobacter pylori strain: evolution during disease progression.</title>
        <authorList>
            <person name="Oh J.D."/>
            <person name="Kling-Baeckhed H."/>
            <person name="Giannakis M."/>
            <person name="Xu J."/>
            <person name="Fulton R.S."/>
            <person name="Fulton L.A."/>
            <person name="Cordum H.S."/>
            <person name="Wang C."/>
            <person name="Elliott G."/>
            <person name="Edwards J."/>
            <person name="Mardis E.R."/>
            <person name="Engstrand L.G."/>
            <person name="Gordon J.I."/>
        </authorList>
    </citation>
    <scope>NUCLEOTIDE SEQUENCE [LARGE SCALE GENOMIC DNA]</scope>
    <source>
        <strain>HPAG1</strain>
    </source>
</reference>
<gene>
    <name evidence="1" type="primary">rimO</name>
    <name type="ordered locus">HPAG1_0718</name>
</gene>
<dbReference type="EC" id="2.8.4.4" evidence="1"/>
<dbReference type="EMBL" id="CP000241">
    <property type="protein sequence ID" value="ABF84785.1"/>
    <property type="molecule type" value="Genomic_DNA"/>
</dbReference>
<dbReference type="RefSeq" id="WP_001197344.1">
    <property type="nucleotide sequence ID" value="NC_008086.1"/>
</dbReference>
<dbReference type="SMR" id="Q1CTD7"/>
<dbReference type="KEGG" id="hpa:HPAG1_0718"/>
<dbReference type="HOGENOM" id="CLU_018697_0_1_7"/>
<dbReference type="GO" id="GO:0005829">
    <property type="term" value="C:cytosol"/>
    <property type="evidence" value="ECO:0007669"/>
    <property type="project" value="TreeGrafter"/>
</dbReference>
<dbReference type="GO" id="GO:0051539">
    <property type="term" value="F:4 iron, 4 sulfur cluster binding"/>
    <property type="evidence" value="ECO:0007669"/>
    <property type="project" value="UniProtKB-UniRule"/>
</dbReference>
<dbReference type="GO" id="GO:0035599">
    <property type="term" value="F:aspartic acid methylthiotransferase activity"/>
    <property type="evidence" value="ECO:0007669"/>
    <property type="project" value="TreeGrafter"/>
</dbReference>
<dbReference type="GO" id="GO:0046872">
    <property type="term" value="F:metal ion binding"/>
    <property type="evidence" value="ECO:0007669"/>
    <property type="project" value="UniProtKB-KW"/>
</dbReference>
<dbReference type="GO" id="GO:0103039">
    <property type="term" value="F:protein methylthiotransferase activity"/>
    <property type="evidence" value="ECO:0007669"/>
    <property type="project" value="UniProtKB-EC"/>
</dbReference>
<dbReference type="GO" id="GO:0006400">
    <property type="term" value="P:tRNA modification"/>
    <property type="evidence" value="ECO:0007669"/>
    <property type="project" value="InterPro"/>
</dbReference>
<dbReference type="CDD" id="cd01335">
    <property type="entry name" value="Radical_SAM"/>
    <property type="match status" value="1"/>
</dbReference>
<dbReference type="FunFam" id="3.40.50.12160:FF:000010">
    <property type="entry name" value="Ribosomal protein S12 methylthiotransferase RimO"/>
    <property type="match status" value="1"/>
</dbReference>
<dbReference type="FunFam" id="3.80.30.20:FF:000015">
    <property type="entry name" value="Ribosomal protein S12 methylthiotransferase RimO"/>
    <property type="match status" value="1"/>
</dbReference>
<dbReference type="Gene3D" id="3.40.50.12160">
    <property type="entry name" value="Methylthiotransferase, N-terminal domain"/>
    <property type="match status" value="1"/>
</dbReference>
<dbReference type="Gene3D" id="3.80.30.20">
    <property type="entry name" value="tm_1862 like domain"/>
    <property type="match status" value="1"/>
</dbReference>
<dbReference type="HAMAP" id="MF_01865">
    <property type="entry name" value="MTTase_RimO"/>
    <property type="match status" value="1"/>
</dbReference>
<dbReference type="InterPro" id="IPR006638">
    <property type="entry name" value="Elp3/MiaA/NifB-like_rSAM"/>
</dbReference>
<dbReference type="InterPro" id="IPR005839">
    <property type="entry name" value="Methylthiotransferase"/>
</dbReference>
<dbReference type="InterPro" id="IPR020612">
    <property type="entry name" value="Methylthiotransferase_CS"/>
</dbReference>
<dbReference type="InterPro" id="IPR013848">
    <property type="entry name" value="Methylthiotransferase_N"/>
</dbReference>
<dbReference type="InterPro" id="IPR038135">
    <property type="entry name" value="Methylthiotransferase_N_sf"/>
</dbReference>
<dbReference type="InterPro" id="IPR005840">
    <property type="entry name" value="Ribosomal_uS12_MeSTrfase_RimO"/>
</dbReference>
<dbReference type="InterPro" id="IPR007197">
    <property type="entry name" value="rSAM"/>
</dbReference>
<dbReference type="InterPro" id="IPR023404">
    <property type="entry name" value="rSAM_horseshoe"/>
</dbReference>
<dbReference type="NCBIfam" id="TIGR01125">
    <property type="entry name" value="30S ribosomal protein S12 methylthiotransferase RimO"/>
    <property type="match status" value="1"/>
</dbReference>
<dbReference type="NCBIfam" id="TIGR00089">
    <property type="entry name" value="MiaB/RimO family radical SAM methylthiotransferase"/>
    <property type="match status" value="1"/>
</dbReference>
<dbReference type="PANTHER" id="PTHR43837">
    <property type="entry name" value="RIBOSOMAL PROTEIN S12 METHYLTHIOTRANSFERASE RIMO"/>
    <property type="match status" value="1"/>
</dbReference>
<dbReference type="PANTHER" id="PTHR43837:SF1">
    <property type="entry name" value="RIBOSOMAL PROTEIN US12 METHYLTHIOTRANSFERASE RIMO"/>
    <property type="match status" value="1"/>
</dbReference>
<dbReference type="Pfam" id="PF04055">
    <property type="entry name" value="Radical_SAM"/>
    <property type="match status" value="1"/>
</dbReference>
<dbReference type="Pfam" id="PF00919">
    <property type="entry name" value="UPF0004"/>
    <property type="match status" value="1"/>
</dbReference>
<dbReference type="SFLD" id="SFLDG01082">
    <property type="entry name" value="B12-binding_domain_containing"/>
    <property type="match status" value="1"/>
</dbReference>
<dbReference type="SFLD" id="SFLDS00029">
    <property type="entry name" value="Radical_SAM"/>
    <property type="match status" value="1"/>
</dbReference>
<dbReference type="SFLD" id="SFLDF00274">
    <property type="entry name" value="ribosomal_protein_S12_methylth"/>
    <property type="match status" value="1"/>
</dbReference>
<dbReference type="SMART" id="SM00729">
    <property type="entry name" value="Elp3"/>
    <property type="match status" value="1"/>
</dbReference>
<dbReference type="SUPFAM" id="SSF102114">
    <property type="entry name" value="Radical SAM enzymes"/>
    <property type="match status" value="1"/>
</dbReference>
<dbReference type="PROSITE" id="PS51449">
    <property type="entry name" value="MTTASE_N"/>
    <property type="match status" value="1"/>
</dbReference>
<dbReference type="PROSITE" id="PS01278">
    <property type="entry name" value="MTTASE_RADICAL"/>
    <property type="match status" value="1"/>
</dbReference>
<dbReference type="PROSITE" id="PS51918">
    <property type="entry name" value="RADICAL_SAM"/>
    <property type="match status" value="1"/>
</dbReference>
<sequence length="439" mass="49604">MQVKENKQLCLISLGCSKNLVDSEVMLGKLYNYTLTNDAKSADVILINTCGFIESAKQESIQTILNAAKDKKEGAILIASGCLSERYKDEIKELIPEVDIFTGVGDYDKIDILIAKKQNQFSEQVFLSEHYNARIITGSSVHAYVKISEGCNQKCSFCAIPSFKGKLQSRELDSILKEVENLALKGYKDMTFIAQDSSSFLYDKGQKDGLIQLIKAIDKQQALKSARILYLYPSSTTLELIGAIESSPIFQNYFDMPIQHISDSMLKKMRRNSSQAHHLKLLDAMKQVKESFIRSTIIVGHPEENEGEFEELSAFLDEFRFDRLNIFAFSAEENTHAYSLEKVPKKTINARIKALNKIALKHQNHSFKALLNKPIKALVEHKEGEYFYKARDLRWAPEVDGEILINDSELATPLQPGHYTIVPSVFKDNILLAKVLSPF</sequence>
<organism>
    <name type="scientific">Helicobacter pylori (strain HPAG1)</name>
    <dbReference type="NCBI Taxonomy" id="357544"/>
    <lineage>
        <taxon>Bacteria</taxon>
        <taxon>Pseudomonadati</taxon>
        <taxon>Campylobacterota</taxon>
        <taxon>Epsilonproteobacteria</taxon>
        <taxon>Campylobacterales</taxon>
        <taxon>Helicobacteraceae</taxon>
        <taxon>Helicobacter</taxon>
    </lineage>
</organism>
<protein>
    <recommendedName>
        <fullName evidence="1">Ribosomal protein uS12 methylthiotransferase RimO</fullName>
        <shortName evidence="1">uS12 MTTase</shortName>
        <shortName evidence="1">uS12 methylthiotransferase</shortName>
        <ecNumber evidence="1">2.8.4.4</ecNumber>
    </recommendedName>
    <alternativeName>
        <fullName evidence="1">Ribosomal protein uS12 (aspartate-C(3))-methylthiotransferase</fullName>
    </alternativeName>
    <alternativeName>
        <fullName evidence="1">Ribosome maturation factor RimO</fullName>
    </alternativeName>
</protein>
<evidence type="ECO:0000255" key="1">
    <source>
        <dbReference type="HAMAP-Rule" id="MF_01865"/>
    </source>
</evidence>
<evidence type="ECO:0000255" key="2">
    <source>
        <dbReference type="PROSITE-ProRule" id="PRU01266"/>
    </source>
</evidence>
<accession>Q1CTD7</accession>
<proteinExistence type="inferred from homology"/>
<feature type="chain" id="PRO_0000374858" description="Ribosomal protein uS12 methylthiotransferase RimO">
    <location>
        <begin position="1"/>
        <end position="439"/>
    </location>
</feature>
<feature type="domain" description="MTTase N-terminal" evidence="1">
    <location>
        <begin position="7"/>
        <end position="119"/>
    </location>
</feature>
<feature type="domain" description="Radical SAM core" evidence="2">
    <location>
        <begin position="137"/>
        <end position="368"/>
    </location>
</feature>
<feature type="binding site" evidence="1">
    <location>
        <position position="16"/>
    </location>
    <ligand>
        <name>[4Fe-4S] cluster</name>
        <dbReference type="ChEBI" id="CHEBI:49883"/>
        <label>1</label>
    </ligand>
</feature>
<feature type="binding site" evidence="1">
    <location>
        <position position="50"/>
    </location>
    <ligand>
        <name>[4Fe-4S] cluster</name>
        <dbReference type="ChEBI" id="CHEBI:49883"/>
        <label>1</label>
    </ligand>
</feature>
<feature type="binding site" evidence="1">
    <location>
        <position position="82"/>
    </location>
    <ligand>
        <name>[4Fe-4S] cluster</name>
        <dbReference type="ChEBI" id="CHEBI:49883"/>
        <label>1</label>
    </ligand>
</feature>
<feature type="binding site" evidence="1">
    <location>
        <position position="151"/>
    </location>
    <ligand>
        <name>[4Fe-4S] cluster</name>
        <dbReference type="ChEBI" id="CHEBI:49883"/>
        <label>2</label>
        <note>4Fe-4S-S-AdoMet</note>
    </ligand>
</feature>
<feature type="binding site" evidence="1">
    <location>
        <position position="155"/>
    </location>
    <ligand>
        <name>[4Fe-4S] cluster</name>
        <dbReference type="ChEBI" id="CHEBI:49883"/>
        <label>2</label>
        <note>4Fe-4S-S-AdoMet</note>
    </ligand>
</feature>
<feature type="binding site" evidence="1">
    <location>
        <position position="158"/>
    </location>
    <ligand>
        <name>[4Fe-4S] cluster</name>
        <dbReference type="ChEBI" id="CHEBI:49883"/>
        <label>2</label>
        <note>4Fe-4S-S-AdoMet</note>
    </ligand>
</feature>